<reference key="1">
    <citation type="journal article" date="1993" name="Nucleic Acids Res.">
        <title>Analysis of the Escherichia coli genome. IV. DNA sequence of the region from 89.2 to 92.8 minutes.</title>
        <authorList>
            <person name="Blattner F.R."/>
            <person name="Burland V.D."/>
            <person name="Plunkett G. III"/>
            <person name="Sofia H.J."/>
            <person name="Daniels D.L."/>
        </authorList>
    </citation>
    <scope>NUCLEOTIDE SEQUENCE [LARGE SCALE GENOMIC DNA]</scope>
    <source>
        <strain>K12 / MG1655 / ATCC 47076</strain>
    </source>
</reference>
<reference key="2">
    <citation type="journal article" date="1997" name="Science">
        <title>The complete genome sequence of Escherichia coli K-12.</title>
        <authorList>
            <person name="Blattner F.R."/>
            <person name="Plunkett G. III"/>
            <person name="Bloch C.A."/>
            <person name="Perna N.T."/>
            <person name="Burland V."/>
            <person name="Riley M."/>
            <person name="Collado-Vides J."/>
            <person name="Glasner J.D."/>
            <person name="Rode C.K."/>
            <person name="Mayhew G.F."/>
            <person name="Gregor J."/>
            <person name="Davis N.W."/>
            <person name="Kirkpatrick H.A."/>
            <person name="Goeden M.A."/>
            <person name="Rose D.J."/>
            <person name="Mau B."/>
            <person name="Shao Y."/>
        </authorList>
    </citation>
    <scope>NUCLEOTIDE SEQUENCE [LARGE SCALE GENOMIC DNA]</scope>
    <source>
        <strain>K12 / MG1655 / ATCC 47076</strain>
    </source>
</reference>
<reference key="3">
    <citation type="journal article" date="2006" name="Mol. Syst. Biol.">
        <title>Highly accurate genome sequences of Escherichia coli K-12 strains MG1655 and W3110.</title>
        <authorList>
            <person name="Hayashi K."/>
            <person name="Morooka N."/>
            <person name="Yamamoto Y."/>
            <person name="Fujita K."/>
            <person name="Isono K."/>
            <person name="Choi S."/>
            <person name="Ohtsubo E."/>
            <person name="Baba T."/>
            <person name="Wanner B.L."/>
            <person name="Mori H."/>
            <person name="Horiuchi T."/>
        </authorList>
    </citation>
    <scope>NUCLEOTIDE SEQUENCE [LARGE SCALE GENOMIC DNA]</scope>
    <source>
        <strain>K12 / W3110 / ATCC 27325 / DSM 5911</strain>
    </source>
</reference>
<organism>
    <name type="scientific">Escherichia coli (strain K12)</name>
    <dbReference type="NCBI Taxonomy" id="83333"/>
    <lineage>
        <taxon>Bacteria</taxon>
        <taxon>Pseudomonadati</taxon>
        <taxon>Pseudomonadota</taxon>
        <taxon>Gammaproteobacteria</taxon>
        <taxon>Enterobacterales</taxon>
        <taxon>Enterobacteriaceae</taxon>
        <taxon>Escherichia</taxon>
    </lineage>
</organism>
<feature type="signal peptide" evidence="1">
    <location>
        <begin position="1"/>
        <end position="17"/>
    </location>
</feature>
<feature type="chain" id="PRO_0000013939" description="Sel1-repeat-containing protein YjcO">
    <location>
        <begin position="18"/>
        <end position="229"/>
    </location>
</feature>
<feature type="repeat" description="Sel1-like 1" evidence="2">
    <location>
        <begin position="48"/>
        <end position="66"/>
    </location>
</feature>
<feature type="repeat" description="Sel1-like 2" evidence="2">
    <location>
        <begin position="85"/>
        <end position="101"/>
    </location>
</feature>
<feature type="repeat" description="Sel1-like 3" evidence="2">
    <location>
        <begin position="143"/>
        <end position="173"/>
    </location>
</feature>
<feature type="repeat" description="Sel1-like 4" evidence="2">
    <location>
        <begin position="180"/>
        <end position="215"/>
    </location>
</feature>
<proteinExistence type="inferred from homology"/>
<accession>P0AF56</accession>
<accession>P32713</accession>
<accession>Q2M6M6</accession>
<sequence length="229" mass="25079">MKKIIALMLFLTFFAHANDSEPGSQYLKAAEAGDRRAQYFLADSWFSSGDLSKAEYWAQKAADSGDADACALLAQIKITNPVSLDYPQAKVLAEKAAQAGSKEGEVTLAHILVNTQAGKPDYPKAISLLENASEDLENDSAVDAQMLLGLIYANGVGIKADDDKATWYFKRSSAISRTGYSEYWAGMMFLNGEEGFIEKNKQKALHWLNLSCMEGFDTGCEEFEKLTNG</sequence>
<dbReference type="EMBL" id="U00006">
    <property type="protein sequence ID" value="AAC43172.1"/>
    <property type="molecule type" value="Genomic_DNA"/>
</dbReference>
<dbReference type="EMBL" id="U00096">
    <property type="protein sequence ID" value="AAD13461.1"/>
    <property type="molecule type" value="Genomic_DNA"/>
</dbReference>
<dbReference type="EMBL" id="AP009048">
    <property type="protein sequence ID" value="BAE78080.1"/>
    <property type="molecule type" value="Genomic_DNA"/>
</dbReference>
<dbReference type="PIR" id="E65216">
    <property type="entry name" value="E65216"/>
</dbReference>
<dbReference type="RefSeq" id="NP_418502.1">
    <property type="nucleotide sequence ID" value="NC_000913.3"/>
</dbReference>
<dbReference type="RefSeq" id="WP_000719886.1">
    <property type="nucleotide sequence ID" value="NZ_STEB01000014.1"/>
</dbReference>
<dbReference type="SMR" id="P0AF56"/>
<dbReference type="BioGRID" id="4261972">
    <property type="interactions" value="8"/>
</dbReference>
<dbReference type="FunCoup" id="P0AF56">
    <property type="interactions" value="70"/>
</dbReference>
<dbReference type="STRING" id="511145.b4078"/>
<dbReference type="jPOST" id="P0AF56"/>
<dbReference type="PaxDb" id="511145-b4078"/>
<dbReference type="EnsemblBacteria" id="AAD13461">
    <property type="protein sequence ID" value="AAD13461"/>
    <property type="gene ID" value="b4078"/>
</dbReference>
<dbReference type="GeneID" id="93777751"/>
<dbReference type="GeneID" id="948586"/>
<dbReference type="KEGG" id="ecj:JW4039"/>
<dbReference type="KEGG" id="eco:b4078"/>
<dbReference type="KEGG" id="ecoc:C3026_22040"/>
<dbReference type="PATRIC" id="fig|511145.12.peg.4202"/>
<dbReference type="EchoBASE" id="EB1894"/>
<dbReference type="eggNOG" id="COG0790">
    <property type="taxonomic scope" value="Bacteria"/>
</dbReference>
<dbReference type="HOGENOM" id="CLU_077623_0_0_6"/>
<dbReference type="InParanoid" id="P0AF56"/>
<dbReference type="OMA" id="EYWAGML"/>
<dbReference type="OrthoDB" id="6621898at2"/>
<dbReference type="PhylomeDB" id="P0AF56"/>
<dbReference type="BioCyc" id="EcoCyc:EG11951-MONOMER"/>
<dbReference type="PRO" id="PR:P0AF56"/>
<dbReference type="Proteomes" id="UP000000625">
    <property type="component" value="Chromosome"/>
</dbReference>
<dbReference type="FunFam" id="1.25.40.740:FF:000001">
    <property type="entry name" value="Sel1 repeat family protein"/>
    <property type="match status" value="1"/>
</dbReference>
<dbReference type="Gene3D" id="1.25.40.740">
    <property type="match status" value="1"/>
</dbReference>
<dbReference type="Gene3D" id="1.25.40.10">
    <property type="entry name" value="Tetratricopeptide repeat domain"/>
    <property type="match status" value="1"/>
</dbReference>
<dbReference type="InterPro" id="IPR052945">
    <property type="entry name" value="Mitotic_Regulator"/>
</dbReference>
<dbReference type="InterPro" id="IPR006597">
    <property type="entry name" value="Sel1-like"/>
</dbReference>
<dbReference type="InterPro" id="IPR011990">
    <property type="entry name" value="TPR-like_helical_dom_sf"/>
</dbReference>
<dbReference type="PANTHER" id="PTHR43628">
    <property type="entry name" value="ACTIVATOR OF C KINASE PROTEIN 1-RELATED"/>
    <property type="match status" value="1"/>
</dbReference>
<dbReference type="PANTHER" id="PTHR43628:SF1">
    <property type="entry name" value="CHITIN SYNTHASE REGULATORY FACTOR 2-RELATED"/>
    <property type="match status" value="1"/>
</dbReference>
<dbReference type="Pfam" id="PF08238">
    <property type="entry name" value="Sel1"/>
    <property type="match status" value="5"/>
</dbReference>
<dbReference type="SMART" id="SM00671">
    <property type="entry name" value="SEL1"/>
    <property type="match status" value="4"/>
</dbReference>
<dbReference type="SUPFAM" id="SSF81901">
    <property type="entry name" value="HCP-like"/>
    <property type="match status" value="2"/>
</dbReference>
<gene>
    <name type="primary">yjcO</name>
    <name type="ordered locus">b4078</name>
    <name type="ordered locus">JW4039</name>
</gene>
<protein>
    <recommendedName>
        <fullName>Sel1-repeat-containing protein YjcO</fullName>
    </recommendedName>
</protein>
<keyword id="KW-1185">Reference proteome</keyword>
<keyword id="KW-0677">Repeat</keyword>
<keyword id="KW-0732">Signal</keyword>
<name>YJCO_ECOLI</name>
<evidence type="ECO:0000255" key="1"/>
<evidence type="ECO:0000305" key="2"/>